<gene>
    <name type="primary">TTPAL</name>
</gene>
<feature type="chain" id="PRO_0000326135" description="Alpha-tocopherol transfer protein-like">
    <location>
        <begin position="1"/>
        <end position="342"/>
    </location>
</feature>
<feature type="domain" description="CRAL-TRIO" evidence="1">
    <location>
        <begin position="117"/>
        <end position="282"/>
    </location>
</feature>
<feature type="region of interest" description="Disordered" evidence="2">
    <location>
        <begin position="1"/>
        <end position="31"/>
    </location>
</feature>
<feature type="compositionally biased region" description="Polar residues" evidence="2">
    <location>
        <begin position="8"/>
        <end position="19"/>
    </location>
</feature>
<comment type="function">
    <text evidence="3">May act as a protein that binds a hydrophobic ligand.</text>
</comment>
<sequence>MSEESDSLRTSPSVASLSENELPPPPEPPGYVCSLTEDLVTKAREELQEKPEWRLRDVQALRDMVRKEYPNLSTSLDDAFLLRFLRARKFDYDRALQLLVNYHSCRRSWPEVFNNLKPSALKDVLASGFLTVLPHTDPRGCHVVCIRPDRWIPSNYPITENIRAIYLTLEKLIQSEETQVNGIVILADYKGVSLSKASHFGPFIAKKVIGILQDGFPIRIKAVHVVNEPRIFKGIFAIIKPFLKEKIANRFFLHGSDLNSLHTNLPRSILPKEYGGTAGELDTATWNAVLLASEDDFVKEFCQPVPTCDSILGQTLLPEGLTSDAQCDDSLRAVKSQLYSCY</sequence>
<accession>Q5RFR0</accession>
<reference key="1">
    <citation type="submission" date="2004-11" db="EMBL/GenBank/DDBJ databases">
        <authorList>
            <consortium name="The German cDNA consortium"/>
        </authorList>
    </citation>
    <scope>NUCLEOTIDE SEQUENCE [LARGE SCALE MRNA]</scope>
    <source>
        <tissue>Kidney</tissue>
    </source>
</reference>
<dbReference type="EMBL" id="CR857092">
    <property type="protein sequence ID" value="CAH89397.1"/>
    <property type="molecule type" value="mRNA"/>
</dbReference>
<dbReference type="RefSeq" id="NP_001124588.1">
    <property type="nucleotide sequence ID" value="NM_001131116.1"/>
</dbReference>
<dbReference type="RefSeq" id="XP_009231888.1">
    <property type="nucleotide sequence ID" value="XM_009233613.1"/>
</dbReference>
<dbReference type="RefSeq" id="XP_009231889.1">
    <property type="nucleotide sequence ID" value="XM_009233614.4"/>
</dbReference>
<dbReference type="RefSeq" id="XP_009231890.1">
    <property type="nucleotide sequence ID" value="XM_009233615.1"/>
</dbReference>
<dbReference type="RefSeq" id="XP_054397356.1">
    <property type="nucleotide sequence ID" value="XM_054541381.2"/>
</dbReference>
<dbReference type="RefSeq" id="XP_054397357.1">
    <property type="nucleotide sequence ID" value="XM_054541382.2"/>
</dbReference>
<dbReference type="RefSeq" id="XP_054397358.1">
    <property type="nucleotide sequence ID" value="XM_054541383.2"/>
</dbReference>
<dbReference type="SMR" id="Q5RFR0"/>
<dbReference type="FunCoup" id="Q5RFR0">
    <property type="interactions" value="406"/>
</dbReference>
<dbReference type="Ensembl" id="ENSPPYT00000012804.2">
    <property type="protein sequence ID" value="ENSPPYP00000012322.1"/>
    <property type="gene ID" value="ENSPPYG00000011034.2"/>
</dbReference>
<dbReference type="GeneID" id="100171424"/>
<dbReference type="KEGG" id="pon:100171424"/>
<dbReference type="CTD" id="79183"/>
<dbReference type="eggNOG" id="KOG1471">
    <property type="taxonomic scope" value="Eukaryota"/>
</dbReference>
<dbReference type="GeneTree" id="ENSGT00940000155407"/>
<dbReference type="HOGENOM" id="CLU_046597_1_3_1"/>
<dbReference type="InParanoid" id="Q5RFR0"/>
<dbReference type="OMA" id="VQCDDSM"/>
<dbReference type="OrthoDB" id="6682367at2759"/>
<dbReference type="Proteomes" id="UP000001595">
    <property type="component" value="Chromosome 20"/>
</dbReference>
<dbReference type="GO" id="GO:0016020">
    <property type="term" value="C:membrane"/>
    <property type="evidence" value="ECO:0007669"/>
    <property type="project" value="TreeGrafter"/>
</dbReference>
<dbReference type="GO" id="GO:1902936">
    <property type="term" value="F:phosphatidylinositol bisphosphate binding"/>
    <property type="evidence" value="ECO:0007669"/>
    <property type="project" value="TreeGrafter"/>
</dbReference>
<dbReference type="CDD" id="cd00170">
    <property type="entry name" value="SEC14"/>
    <property type="match status" value="1"/>
</dbReference>
<dbReference type="FunFam" id="1.10.8.20:FF:000001">
    <property type="entry name" value="Alpha-tocopherol transfer protein-like"/>
    <property type="match status" value="1"/>
</dbReference>
<dbReference type="FunFam" id="3.40.525.10:FF:000002">
    <property type="entry name" value="Alpha-tocopherol transfer protein-like"/>
    <property type="match status" value="1"/>
</dbReference>
<dbReference type="Gene3D" id="1.20.5.1200">
    <property type="entry name" value="Alpha-tocopherol transfer"/>
    <property type="match status" value="1"/>
</dbReference>
<dbReference type="Gene3D" id="3.40.525.10">
    <property type="entry name" value="CRAL-TRIO lipid binding domain"/>
    <property type="match status" value="1"/>
</dbReference>
<dbReference type="Gene3D" id="1.10.8.20">
    <property type="entry name" value="N-terminal domain of phosphatidylinositol transfer protein sec14p"/>
    <property type="match status" value="1"/>
</dbReference>
<dbReference type="InterPro" id="IPR001251">
    <property type="entry name" value="CRAL-TRIO_dom"/>
</dbReference>
<dbReference type="InterPro" id="IPR036865">
    <property type="entry name" value="CRAL-TRIO_dom_sf"/>
</dbReference>
<dbReference type="InterPro" id="IPR011074">
    <property type="entry name" value="CRAL/TRIO_N_dom"/>
</dbReference>
<dbReference type="InterPro" id="IPR036273">
    <property type="entry name" value="CRAL/TRIO_N_dom_sf"/>
</dbReference>
<dbReference type="PANTHER" id="PTHR10174:SF130">
    <property type="entry name" value="ALPHA-TOCOPHEROL TRANSFER PROTEIN-LIKE"/>
    <property type="match status" value="1"/>
</dbReference>
<dbReference type="PANTHER" id="PTHR10174">
    <property type="entry name" value="ALPHA-TOCOPHEROL TRANSFER PROTEIN-RELATED"/>
    <property type="match status" value="1"/>
</dbReference>
<dbReference type="Pfam" id="PF00650">
    <property type="entry name" value="CRAL_TRIO"/>
    <property type="match status" value="1"/>
</dbReference>
<dbReference type="Pfam" id="PF03765">
    <property type="entry name" value="CRAL_TRIO_N"/>
    <property type="match status" value="1"/>
</dbReference>
<dbReference type="PRINTS" id="PR00180">
    <property type="entry name" value="CRETINALDHBP"/>
</dbReference>
<dbReference type="SMART" id="SM01100">
    <property type="entry name" value="CRAL_TRIO_N"/>
    <property type="match status" value="1"/>
</dbReference>
<dbReference type="SMART" id="SM00516">
    <property type="entry name" value="SEC14"/>
    <property type="match status" value="1"/>
</dbReference>
<dbReference type="SUPFAM" id="SSF52087">
    <property type="entry name" value="CRAL/TRIO domain"/>
    <property type="match status" value="1"/>
</dbReference>
<dbReference type="SUPFAM" id="SSF46938">
    <property type="entry name" value="CRAL/TRIO N-terminal domain"/>
    <property type="match status" value="1"/>
</dbReference>
<dbReference type="PROSITE" id="PS50191">
    <property type="entry name" value="CRAL_TRIO"/>
    <property type="match status" value="1"/>
</dbReference>
<proteinExistence type="evidence at transcript level"/>
<organism>
    <name type="scientific">Pongo abelii</name>
    <name type="common">Sumatran orangutan</name>
    <name type="synonym">Pongo pygmaeus abelii</name>
    <dbReference type="NCBI Taxonomy" id="9601"/>
    <lineage>
        <taxon>Eukaryota</taxon>
        <taxon>Metazoa</taxon>
        <taxon>Chordata</taxon>
        <taxon>Craniata</taxon>
        <taxon>Vertebrata</taxon>
        <taxon>Euteleostomi</taxon>
        <taxon>Mammalia</taxon>
        <taxon>Eutheria</taxon>
        <taxon>Euarchontoglires</taxon>
        <taxon>Primates</taxon>
        <taxon>Haplorrhini</taxon>
        <taxon>Catarrhini</taxon>
        <taxon>Hominidae</taxon>
        <taxon>Pongo</taxon>
    </lineage>
</organism>
<protein>
    <recommendedName>
        <fullName>Alpha-tocopherol transfer protein-like</fullName>
    </recommendedName>
</protein>
<keyword id="KW-1185">Reference proteome</keyword>
<keyword id="KW-0813">Transport</keyword>
<evidence type="ECO:0000255" key="1">
    <source>
        <dbReference type="PROSITE-ProRule" id="PRU00056"/>
    </source>
</evidence>
<evidence type="ECO:0000256" key="2">
    <source>
        <dbReference type="SAM" id="MobiDB-lite"/>
    </source>
</evidence>
<evidence type="ECO:0000305" key="3"/>
<name>TTPAL_PONAB</name>